<reference key="1">
    <citation type="journal article" date="2004" name="Science">
        <title>The 1.2-megabase genome sequence of Mimivirus.</title>
        <authorList>
            <person name="Raoult D."/>
            <person name="Audic S."/>
            <person name="Robert C."/>
            <person name="Abergel C."/>
            <person name="Renesto P."/>
            <person name="Ogata H."/>
            <person name="La Scola B."/>
            <person name="Susan M."/>
            <person name="Claverie J.-M."/>
        </authorList>
    </citation>
    <scope>NUCLEOTIDE SEQUENCE [LARGE SCALE GENOMIC DNA]</scope>
    <source>
        <strain>Rowbotham-Bradford</strain>
    </source>
</reference>
<protein>
    <recommendedName>
        <fullName>Uncharacterized Bro-N domain-containing protein L2</fullName>
    </recommendedName>
</protein>
<sequence>MRKNLLRILKEKDMSMTKKGYISLYDFVEKIIGSKNPVAYASKIKDHNPVIINEKEYISPESCLNILKNAKFAKCRELYNNLQVKDGDKTSIIDVNNNIFQFEGKRFTSFFVDKRDGKWDVWIYGAEVARFLGYNDDKKAISIHVESCNRLIFEEIRNNFPIESNSIPKTLDKKTKFINLSGFCNLIHHSKKPFAMKIKKWLDDEVIPALIMDGVYSMQPKELKVKFFYEDNYISDFLLRVIKNRE</sequence>
<feature type="chain" id="PRO_0000250642" description="Uncharacterized Bro-N domain-containing protein L2">
    <location>
        <begin position="1"/>
        <end position="246"/>
    </location>
</feature>
<feature type="domain" description="Bro-N" evidence="1">
    <location>
        <begin position="92"/>
        <end position="214"/>
    </location>
</feature>
<organismHost>
    <name type="scientific">Acanthamoeba polyphaga</name>
    <name type="common">Amoeba</name>
    <dbReference type="NCBI Taxonomy" id="5757"/>
</organismHost>
<name>YL002_MIMIV</name>
<keyword id="KW-1185">Reference proteome</keyword>
<evidence type="ECO:0000255" key="1">
    <source>
        <dbReference type="PROSITE-ProRule" id="PRU01086"/>
    </source>
</evidence>
<accession>Q5UP77</accession>
<gene>
    <name type="ordered locus">MIMI_L2</name>
</gene>
<proteinExistence type="predicted"/>
<dbReference type="EMBL" id="AY653733">
    <property type="protein sequence ID" value="AAV50277.1"/>
    <property type="molecule type" value="Genomic_DNA"/>
</dbReference>
<dbReference type="KEGG" id="vg:9924570"/>
<dbReference type="OrthoDB" id="5682at10239"/>
<dbReference type="Proteomes" id="UP000001134">
    <property type="component" value="Genome"/>
</dbReference>
<dbReference type="InterPro" id="IPR003497">
    <property type="entry name" value="BRO_N_domain"/>
</dbReference>
<dbReference type="Pfam" id="PF02498">
    <property type="entry name" value="Bro-N"/>
    <property type="match status" value="1"/>
</dbReference>
<dbReference type="SMART" id="SM01040">
    <property type="entry name" value="Bro-N"/>
    <property type="match status" value="1"/>
</dbReference>
<dbReference type="PROSITE" id="PS51750">
    <property type="entry name" value="BRO_N"/>
    <property type="match status" value="1"/>
</dbReference>
<organism>
    <name type="scientific">Acanthamoeba polyphaga mimivirus</name>
    <name type="common">APMV</name>
    <dbReference type="NCBI Taxonomy" id="212035"/>
    <lineage>
        <taxon>Viruses</taxon>
        <taxon>Varidnaviria</taxon>
        <taxon>Bamfordvirae</taxon>
        <taxon>Nucleocytoviricota</taxon>
        <taxon>Megaviricetes</taxon>
        <taxon>Imitervirales</taxon>
        <taxon>Mimiviridae</taxon>
        <taxon>Megamimivirinae</taxon>
        <taxon>Mimivirus</taxon>
        <taxon>Mimivirus bradfordmassiliense</taxon>
    </lineage>
</organism>